<feature type="chain" id="PRO_1000195195" description="Holliday junction branch migration complex subunit RuvB">
    <location>
        <begin position="1"/>
        <end position="361"/>
    </location>
</feature>
<feature type="region of interest" description="Large ATPase domain (RuvB-L)" evidence="1">
    <location>
        <begin position="1"/>
        <end position="183"/>
    </location>
</feature>
<feature type="region of interest" description="Small ATPAse domain (RuvB-S)" evidence="1">
    <location>
        <begin position="184"/>
        <end position="254"/>
    </location>
</feature>
<feature type="region of interest" description="Head domain (RuvB-H)" evidence="1">
    <location>
        <begin position="257"/>
        <end position="361"/>
    </location>
</feature>
<feature type="binding site" evidence="1">
    <location>
        <position position="22"/>
    </location>
    <ligand>
        <name>ATP</name>
        <dbReference type="ChEBI" id="CHEBI:30616"/>
    </ligand>
</feature>
<feature type="binding site" evidence="1">
    <location>
        <position position="23"/>
    </location>
    <ligand>
        <name>ATP</name>
        <dbReference type="ChEBI" id="CHEBI:30616"/>
    </ligand>
</feature>
<feature type="binding site" evidence="1">
    <location>
        <position position="64"/>
    </location>
    <ligand>
        <name>ATP</name>
        <dbReference type="ChEBI" id="CHEBI:30616"/>
    </ligand>
</feature>
<feature type="binding site" evidence="1">
    <location>
        <position position="67"/>
    </location>
    <ligand>
        <name>ATP</name>
        <dbReference type="ChEBI" id="CHEBI:30616"/>
    </ligand>
</feature>
<feature type="binding site" evidence="1">
    <location>
        <position position="68"/>
    </location>
    <ligand>
        <name>ATP</name>
        <dbReference type="ChEBI" id="CHEBI:30616"/>
    </ligand>
</feature>
<feature type="binding site" evidence="1">
    <location>
        <position position="68"/>
    </location>
    <ligand>
        <name>Mg(2+)</name>
        <dbReference type="ChEBI" id="CHEBI:18420"/>
    </ligand>
</feature>
<feature type="binding site" evidence="1">
    <location>
        <position position="69"/>
    </location>
    <ligand>
        <name>ATP</name>
        <dbReference type="ChEBI" id="CHEBI:30616"/>
    </ligand>
</feature>
<feature type="binding site" evidence="1">
    <location>
        <begin position="130"/>
        <end position="132"/>
    </location>
    <ligand>
        <name>ATP</name>
        <dbReference type="ChEBI" id="CHEBI:30616"/>
    </ligand>
</feature>
<feature type="binding site" evidence="1">
    <location>
        <position position="173"/>
    </location>
    <ligand>
        <name>ATP</name>
        <dbReference type="ChEBI" id="CHEBI:30616"/>
    </ligand>
</feature>
<feature type="binding site" evidence="1">
    <location>
        <position position="183"/>
    </location>
    <ligand>
        <name>ATP</name>
        <dbReference type="ChEBI" id="CHEBI:30616"/>
    </ligand>
</feature>
<feature type="binding site" evidence="1">
    <location>
        <position position="220"/>
    </location>
    <ligand>
        <name>ATP</name>
        <dbReference type="ChEBI" id="CHEBI:30616"/>
    </ligand>
</feature>
<feature type="binding site" evidence="1">
    <location>
        <position position="312"/>
    </location>
    <ligand>
        <name>DNA</name>
        <dbReference type="ChEBI" id="CHEBI:16991"/>
    </ligand>
</feature>
<feature type="binding site" evidence="1">
    <location>
        <position position="317"/>
    </location>
    <ligand>
        <name>DNA</name>
        <dbReference type="ChEBI" id="CHEBI:16991"/>
    </ligand>
</feature>
<organism>
    <name type="scientific">Pseudarthrobacter chlorophenolicus (strain ATCC 700700 / DSM 12829 / CIP 107037 / JCM 12360 / KCTC 9906 / NCIMB 13794 / A6)</name>
    <name type="common">Arthrobacter chlorophenolicus</name>
    <dbReference type="NCBI Taxonomy" id="452863"/>
    <lineage>
        <taxon>Bacteria</taxon>
        <taxon>Bacillati</taxon>
        <taxon>Actinomycetota</taxon>
        <taxon>Actinomycetes</taxon>
        <taxon>Micrococcales</taxon>
        <taxon>Micrococcaceae</taxon>
        <taxon>Pseudarthrobacter</taxon>
    </lineage>
</organism>
<protein>
    <recommendedName>
        <fullName evidence="1">Holliday junction branch migration complex subunit RuvB</fullName>
        <ecNumber evidence="1">3.6.4.-</ecNumber>
    </recommendedName>
</protein>
<proteinExistence type="inferred from homology"/>
<dbReference type="EC" id="3.6.4.-" evidence="1"/>
<dbReference type="EMBL" id="CP001341">
    <property type="protein sequence ID" value="ACL40005.1"/>
    <property type="molecule type" value="Genomic_DNA"/>
</dbReference>
<dbReference type="RefSeq" id="WP_015937223.1">
    <property type="nucleotide sequence ID" value="NC_011886.1"/>
</dbReference>
<dbReference type="SMR" id="B8H9D6"/>
<dbReference type="STRING" id="452863.Achl_2031"/>
<dbReference type="KEGG" id="ach:Achl_2031"/>
<dbReference type="eggNOG" id="COG2255">
    <property type="taxonomic scope" value="Bacteria"/>
</dbReference>
<dbReference type="HOGENOM" id="CLU_055599_1_0_11"/>
<dbReference type="OrthoDB" id="9804478at2"/>
<dbReference type="Proteomes" id="UP000002505">
    <property type="component" value="Chromosome"/>
</dbReference>
<dbReference type="GO" id="GO:0005737">
    <property type="term" value="C:cytoplasm"/>
    <property type="evidence" value="ECO:0007669"/>
    <property type="project" value="UniProtKB-SubCell"/>
</dbReference>
<dbReference type="GO" id="GO:0048476">
    <property type="term" value="C:Holliday junction resolvase complex"/>
    <property type="evidence" value="ECO:0007669"/>
    <property type="project" value="UniProtKB-UniRule"/>
</dbReference>
<dbReference type="GO" id="GO:0005524">
    <property type="term" value="F:ATP binding"/>
    <property type="evidence" value="ECO:0007669"/>
    <property type="project" value="UniProtKB-UniRule"/>
</dbReference>
<dbReference type="GO" id="GO:0016887">
    <property type="term" value="F:ATP hydrolysis activity"/>
    <property type="evidence" value="ECO:0007669"/>
    <property type="project" value="InterPro"/>
</dbReference>
<dbReference type="GO" id="GO:0000400">
    <property type="term" value="F:four-way junction DNA binding"/>
    <property type="evidence" value="ECO:0007669"/>
    <property type="project" value="UniProtKB-UniRule"/>
</dbReference>
<dbReference type="GO" id="GO:0009378">
    <property type="term" value="F:four-way junction helicase activity"/>
    <property type="evidence" value="ECO:0007669"/>
    <property type="project" value="InterPro"/>
</dbReference>
<dbReference type="GO" id="GO:0006310">
    <property type="term" value="P:DNA recombination"/>
    <property type="evidence" value="ECO:0007669"/>
    <property type="project" value="UniProtKB-UniRule"/>
</dbReference>
<dbReference type="GO" id="GO:0006281">
    <property type="term" value="P:DNA repair"/>
    <property type="evidence" value="ECO:0007669"/>
    <property type="project" value="UniProtKB-UniRule"/>
</dbReference>
<dbReference type="CDD" id="cd00009">
    <property type="entry name" value="AAA"/>
    <property type="match status" value="1"/>
</dbReference>
<dbReference type="Gene3D" id="1.10.8.60">
    <property type="match status" value="1"/>
</dbReference>
<dbReference type="Gene3D" id="3.40.50.300">
    <property type="entry name" value="P-loop containing nucleotide triphosphate hydrolases"/>
    <property type="match status" value="1"/>
</dbReference>
<dbReference type="Gene3D" id="1.10.10.10">
    <property type="entry name" value="Winged helix-like DNA-binding domain superfamily/Winged helix DNA-binding domain"/>
    <property type="match status" value="1"/>
</dbReference>
<dbReference type="HAMAP" id="MF_00016">
    <property type="entry name" value="DNA_HJ_migration_RuvB"/>
    <property type="match status" value="1"/>
</dbReference>
<dbReference type="InterPro" id="IPR003593">
    <property type="entry name" value="AAA+_ATPase"/>
</dbReference>
<dbReference type="InterPro" id="IPR041445">
    <property type="entry name" value="AAA_lid_4"/>
</dbReference>
<dbReference type="InterPro" id="IPR004605">
    <property type="entry name" value="DNA_helicase_Holl-junc_RuvB"/>
</dbReference>
<dbReference type="InterPro" id="IPR027417">
    <property type="entry name" value="P-loop_NTPase"/>
</dbReference>
<dbReference type="InterPro" id="IPR008824">
    <property type="entry name" value="RuvB-like_N"/>
</dbReference>
<dbReference type="InterPro" id="IPR008823">
    <property type="entry name" value="RuvB_C"/>
</dbReference>
<dbReference type="InterPro" id="IPR036388">
    <property type="entry name" value="WH-like_DNA-bd_sf"/>
</dbReference>
<dbReference type="InterPro" id="IPR036390">
    <property type="entry name" value="WH_DNA-bd_sf"/>
</dbReference>
<dbReference type="NCBIfam" id="NF000868">
    <property type="entry name" value="PRK00080.1"/>
    <property type="match status" value="1"/>
</dbReference>
<dbReference type="NCBIfam" id="TIGR00635">
    <property type="entry name" value="ruvB"/>
    <property type="match status" value="1"/>
</dbReference>
<dbReference type="PANTHER" id="PTHR42848">
    <property type="match status" value="1"/>
</dbReference>
<dbReference type="PANTHER" id="PTHR42848:SF1">
    <property type="entry name" value="HOLLIDAY JUNCTION BRANCH MIGRATION COMPLEX SUBUNIT RUVB"/>
    <property type="match status" value="1"/>
</dbReference>
<dbReference type="Pfam" id="PF17864">
    <property type="entry name" value="AAA_lid_4"/>
    <property type="match status" value="1"/>
</dbReference>
<dbReference type="Pfam" id="PF05491">
    <property type="entry name" value="RuvB_C"/>
    <property type="match status" value="1"/>
</dbReference>
<dbReference type="Pfam" id="PF05496">
    <property type="entry name" value="RuvB_N"/>
    <property type="match status" value="1"/>
</dbReference>
<dbReference type="SMART" id="SM00382">
    <property type="entry name" value="AAA"/>
    <property type="match status" value="1"/>
</dbReference>
<dbReference type="SUPFAM" id="SSF52540">
    <property type="entry name" value="P-loop containing nucleoside triphosphate hydrolases"/>
    <property type="match status" value="1"/>
</dbReference>
<dbReference type="SUPFAM" id="SSF46785">
    <property type="entry name" value="Winged helix' DNA-binding domain"/>
    <property type="match status" value="1"/>
</dbReference>
<accession>B8H9D6</accession>
<gene>
    <name evidence="1" type="primary">ruvB</name>
    <name type="ordered locus">Achl_2031</name>
</gene>
<keyword id="KW-0067">ATP-binding</keyword>
<keyword id="KW-0963">Cytoplasm</keyword>
<keyword id="KW-0227">DNA damage</keyword>
<keyword id="KW-0233">DNA recombination</keyword>
<keyword id="KW-0234">DNA repair</keyword>
<keyword id="KW-0238">DNA-binding</keyword>
<keyword id="KW-0378">Hydrolase</keyword>
<keyword id="KW-0547">Nucleotide-binding</keyword>
<evidence type="ECO:0000255" key="1">
    <source>
        <dbReference type="HAMAP-Rule" id="MF_00016"/>
    </source>
</evidence>
<sequence>MAEPSLVAAGEEPEERAIEAALRPKNLDDFVGQHRVRKQLSLVLKASRMRGRSADHVLFSGPPGLGKTTLAMIVAAEMNAPLRISSGPAIQHAGDLAAILSSLSEGEVLFLDEIHRMSRPAEEMLYMAMEDFRVDIVVGKGAGATAIPLELPPFTLVGATTRAGLLPGPLRDRFGFTGHLEFYSVPELELVLRRSAGLLDLKVNSAGFSEIAGRSRGTPRIANRLLRRVRDWALVHGVDQIDARSASAALDMYEVDKKGLDRLDRSVLEALITKFGGGPVGLSTLAIAVGEETETVETVAEPFLVREGLLGRTPRGRIAMAPAWTHLGYAIPAGVFGQEQLDLFDRETGAEVTGEWAPESQ</sequence>
<comment type="function">
    <text evidence="1">The RuvA-RuvB-RuvC complex processes Holliday junction (HJ) DNA during genetic recombination and DNA repair, while the RuvA-RuvB complex plays an important role in the rescue of blocked DNA replication forks via replication fork reversal (RFR). RuvA specifically binds to HJ cruciform DNA, conferring on it an open structure. The RuvB hexamer acts as an ATP-dependent pump, pulling dsDNA into and through the RuvAB complex. RuvB forms 2 homohexamers on either side of HJ DNA bound by 1 or 2 RuvA tetramers; 4 subunits per hexamer contact DNA at a time. Coordinated motions by a converter formed by DNA-disengaged RuvB subunits stimulates ATP hydrolysis and nucleotide exchange. Immobilization of the converter enables RuvB to convert the ATP-contained energy into a lever motion, pulling 2 nucleotides of DNA out of the RuvA tetramer per ATP hydrolyzed, thus driving DNA branch migration. The RuvB motors rotate together with the DNA substrate, which together with the progressing nucleotide cycle form the mechanistic basis for DNA recombination by continuous HJ branch migration. Branch migration allows RuvC to scan DNA until it finds its consensus sequence, where it cleaves and resolves cruciform DNA.</text>
</comment>
<comment type="catalytic activity">
    <reaction evidence="1">
        <text>ATP + H2O = ADP + phosphate + H(+)</text>
        <dbReference type="Rhea" id="RHEA:13065"/>
        <dbReference type="ChEBI" id="CHEBI:15377"/>
        <dbReference type="ChEBI" id="CHEBI:15378"/>
        <dbReference type="ChEBI" id="CHEBI:30616"/>
        <dbReference type="ChEBI" id="CHEBI:43474"/>
        <dbReference type="ChEBI" id="CHEBI:456216"/>
    </reaction>
</comment>
<comment type="subunit">
    <text evidence="1">Homohexamer. Forms an RuvA(8)-RuvB(12)-Holliday junction (HJ) complex. HJ DNA is sandwiched between 2 RuvA tetramers; dsDNA enters through RuvA and exits via RuvB. An RuvB hexamer assembles on each DNA strand where it exits the tetramer. Each RuvB hexamer is contacted by two RuvA subunits (via domain III) on 2 adjacent RuvB subunits; this complex drives branch migration. In the full resolvosome a probable DNA-RuvA(4)-RuvB(12)-RuvC(2) complex forms which resolves the HJ.</text>
</comment>
<comment type="subcellular location">
    <subcellularLocation>
        <location evidence="1">Cytoplasm</location>
    </subcellularLocation>
</comment>
<comment type="domain">
    <text evidence="1">Has 3 domains, the large (RuvB-L) and small ATPase (RuvB-S) domains and the C-terminal head (RuvB-H) domain. The head domain binds DNA, while the ATPase domains jointly bind ATP, ADP or are empty depending on the state of the subunit in the translocation cycle. During a single DNA translocation step the structure of each domain remains the same, but their relative positions change.</text>
</comment>
<comment type="similarity">
    <text evidence="1">Belongs to the RuvB family.</text>
</comment>
<name>RUVB_PSECP</name>
<reference key="1">
    <citation type="submission" date="2009-01" db="EMBL/GenBank/DDBJ databases">
        <title>Complete sequence of chromosome of Arthrobacter chlorophenolicus A6.</title>
        <authorList>
            <consortium name="US DOE Joint Genome Institute"/>
            <person name="Lucas S."/>
            <person name="Copeland A."/>
            <person name="Lapidus A."/>
            <person name="Glavina del Rio T."/>
            <person name="Tice H."/>
            <person name="Bruce D."/>
            <person name="Goodwin L."/>
            <person name="Pitluck S."/>
            <person name="Goltsman E."/>
            <person name="Clum A."/>
            <person name="Larimer F."/>
            <person name="Land M."/>
            <person name="Hauser L."/>
            <person name="Kyrpides N."/>
            <person name="Mikhailova N."/>
            <person name="Jansson J."/>
            <person name="Richardson P."/>
        </authorList>
    </citation>
    <scope>NUCLEOTIDE SEQUENCE [LARGE SCALE GENOMIC DNA]</scope>
    <source>
        <strain>ATCC 700700 / DSM 12829 / CIP 107037 / JCM 12360 / KCTC 9906 / NCIMB 13794 / A6</strain>
    </source>
</reference>